<name>NFI_ROSS1</name>
<keyword id="KW-0963">Cytoplasm</keyword>
<keyword id="KW-0227">DNA damage</keyword>
<keyword id="KW-0234">DNA repair</keyword>
<keyword id="KW-0255">Endonuclease</keyword>
<keyword id="KW-0378">Hydrolase</keyword>
<keyword id="KW-0460">Magnesium</keyword>
<keyword id="KW-0479">Metal-binding</keyword>
<keyword id="KW-0540">Nuclease</keyword>
<proteinExistence type="inferred from homology"/>
<protein>
    <recommendedName>
        <fullName evidence="1">Endonuclease V</fullName>
        <ecNumber evidence="1">3.1.21.7</ecNumber>
    </recommendedName>
    <alternativeName>
        <fullName evidence="1">Deoxyinosine 3'endonuclease</fullName>
    </alternativeName>
    <alternativeName>
        <fullName evidence="1">Deoxyribonuclease V</fullName>
        <shortName evidence="1">DNase V</shortName>
    </alternativeName>
</protein>
<accession>A5UWX7</accession>
<gene>
    <name evidence="1" type="primary">nfi</name>
    <name type="ordered locus">RoseRS_2758</name>
</gene>
<feature type="chain" id="PRO_1000148538" description="Endonuclease V">
    <location>
        <begin position="1"/>
        <end position="222"/>
    </location>
</feature>
<feature type="binding site" evidence="1">
    <location>
        <position position="43"/>
    </location>
    <ligand>
        <name>Mg(2+)</name>
        <dbReference type="ChEBI" id="CHEBI:18420"/>
    </ligand>
</feature>
<feature type="binding site" evidence="1">
    <location>
        <position position="109"/>
    </location>
    <ligand>
        <name>Mg(2+)</name>
        <dbReference type="ChEBI" id="CHEBI:18420"/>
    </ligand>
</feature>
<feature type="site" description="Interaction with target DNA" evidence="1">
    <location>
        <position position="79"/>
    </location>
</feature>
<dbReference type="EC" id="3.1.21.7" evidence="1"/>
<dbReference type="EMBL" id="CP000686">
    <property type="protein sequence ID" value="ABQ91130.1"/>
    <property type="molecule type" value="Genomic_DNA"/>
</dbReference>
<dbReference type="RefSeq" id="WP_011957474.1">
    <property type="nucleotide sequence ID" value="NC_009523.1"/>
</dbReference>
<dbReference type="SMR" id="A5UWX7"/>
<dbReference type="STRING" id="357808.RoseRS_2758"/>
<dbReference type="KEGG" id="rrs:RoseRS_2758"/>
<dbReference type="eggNOG" id="COG1515">
    <property type="taxonomic scope" value="Bacteria"/>
</dbReference>
<dbReference type="HOGENOM" id="CLU_047631_1_1_0"/>
<dbReference type="OrthoDB" id="9790916at2"/>
<dbReference type="Proteomes" id="UP000006554">
    <property type="component" value="Chromosome"/>
</dbReference>
<dbReference type="GO" id="GO:0005737">
    <property type="term" value="C:cytoplasm"/>
    <property type="evidence" value="ECO:0007669"/>
    <property type="project" value="UniProtKB-SubCell"/>
</dbReference>
<dbReference type="GO" id="GO:0043737">
    <property type="term" value="F:deoxyribonuclease V activity"/>
    <property type="evidence" value="ECO:0007669"/>
    <property type="project" value="UniProtKB-UniRule"/>
</dbReference>
<dbReference type="GO" id="GO:0000287">
    <property type="term" value="F:magnesium ion binding"/>
    <property type="evidence" value="ECO:0007669"/>
    <property type="project" value="UniProtKB-UniRule"/>
</dbReference>
<dbReference type="GO" id="GO:0016891">
    <property type="term" value="F:RNA endonuclease activity, producing 5'-phosphomonoesters"/>
    <property type="evidence" value="ECO:0007669"/>
    <property type="project" value="TreeGrafter"/>
</dbReference>
<dbReference type="GO" id="GO:0003727">
    <property type="term" value="F:single-stranded RNA binding"/>
    <property type="evidence" value="ECO:0007669"/>
    <property type="project" value="TreeGrafter"/>
</dbReference>
<dbReference type="GO" id="GO:0006281">
    <property type="term" value="P:DNA repair"/>
    <property type="evidence" value="ECO:0007669"/>
    <property type="project" value="UniProtKB-UniRule"/>
</dbReference>
<dbReference type="CDD" id="cd06559">
    <property type="entry name" value="Endonuclease_V"/>
    <property type="match status" value="1"/>
</dbReference>
<dbReference type="Gene3D" id="3.30.2170.10">
    <property type="entry name" value="archaeoglobus fulgidus dsm 4304 superfamily"/>
    <property type="match status" value="1"/>
</dbReference>
<dbReference type="HAMAP" id="MF_00801">
    <property type="entry name" value="Endonuclease_5"/>
    <property type="match status" value="1"/>
</dbReference>
<dbReference type="InterPro" id="IPR007581">
    <property type="entry name" value="Endonuclease-V"/>
</dbReference>
<dbReference type="NCBIfam" id="NF008629">
    <property type="entry name" value="PRK11617.1"/>
    <property type="match status" value="1"/>
</dbReference>
<dbReference type="PANTHER" id="PTHR28511">
    <property type="entry name" value="ENDONUCLEASE V"/>
    <property type="match status" value="1"/>
</dbReference>
<dbReference type="PANTHER" id="PTHR28511:SF1">
    <property type="entry name" value="ENDONUCLEASE V"/>
    <property type="match status" value="1"/>
</dbReference>
<dbReference type="Pfam" id="PF04493">
    <property type="entry name" value="Endonuclease_5"/>
    <property type="match status" value="1"/>
</dbReference>
<sequence length="222" mass="23925">MDQSFDQPWPTSLAEARAIQQHIRTRIITHDAHGPIRTVAGVDTGYSGDSALAAVVVLAFPSLEVLDYAVARRQIDFPYVPGYLSFREAPAVLDALASLRIAPDLLICDGHGLAHPRRCGIASHLGVLTDLPSIGCAKSLLVGTHEPPPDVRGAWTPLHDQGEVVGAALRTRPGVRPVYVSIGHRVALETAIRFVMACVTRYRLPETTRAADALASHGRIPR</sequence>
<evidence type="ECO:0000255" key="1">
    <source>
        <dbReference type="HAMAP-Rule" id="MF_00801"/>
    </source>
</evidence>
<organism>
    <name type="scientific">Roseiflexus sp. (strain RS-1)</name>
    <dbReference type="NCBI Taxonomy" id="357808"/>
    <lineage>
        <taxon>Bacteria</taxon>
        <taxon>Bacillati</taxon>
        <taxon>Chloroflexota</taxon>
        <taxon>Chloroflexia</taxon>
        <taxon>Chloroflexales</taxon>
        <taxon>Roseiflexineae</taxon>
        <taxon>Roseiflexaceae</taxon>
        <taxon>Roseiflexus</taxon>
    </lineage>
</organism>
<comment type="function">
    <text evidence="1">DNA repair enzyme involved in the repair of deaminated bases. Selectively cleaves double-stranded DNA at the second phosphodiester bond 3' to a deoxyinosine leaving behind the intact lesion on the nicked DNA.</text>
</comment>
<comment type="catalytic activity">
    <reaction evidence="1">
        <text>Endonucleolytic cleavage at apurinic or apyrimidinic sites to products with a 5'-phosphate.</text>
        <dbReference type="EC" id="3.1.21.7"/>
    </reaction>
</comment>
<comment type="cofactor">
    <cofactor evidence="1">
        <name>Mg(2+)</name>
        <dbReference type="ChEBI" id="CHEBI:18420"/>
    </cofactor>
</comment>
<comment type="subcellular location">
    <subcellularLocation>
        <location evidence="1">Cytoplasm</location>
    </subcellularLocation>
</comment>
<comment type="similarity">
    <text evidence="1">Belongs to the endonuclease V family.</text>
</comment>
<reference key="1">
    <citation type="submission" date="2007-04" db="EMBL/GenBank/DDBJ databases">
        <title>Complete sequence of Roseiflexus sp. RS-1.</title>
        <authorList>
            <consortium name="US DOE Joint Genome Institute"/>
            <person name="Copeland A."/>
            <person name="Lucas S."/>
            <person name="Lapidus A."/>
            <person name="Barry K."/>
            <person name="Detter J.C."/>
            <person name="Glavina del Rio T."/>
            <person name="Hammon N."/>
            <person name="Israni S."/>
            <person name="Dalin E."/>
            <person name="Tice H."/>
            <person name="Pitluck S."/>
            <person name="Chertkov O."/>
            <person name="Brettin T."/>
            <person name="Bruce D."/>
            <person name="Han C."/>
            <person name="Schmutz J."/>
            <person name="Larimer F."/>
            <person name="Land M."/>
            <person name="Hauser L."/>
            <person name="Kyrpides N."/>
            <person name="Mikhailova N."/>
            <person name="Bryant D.A."/>
            <person name="Richardson P."/>
        </authorList>
    </citation>
    <scope>NUCLEOTIDE SEQUENCE [LARGE SCALE GENOMIC DNA]</scope>
    <source>
        <strain>RS-1</strain>
    </source>
</reference>